<reference key="1">
    <citation type="journal article" date="2011" name="J. Bacteriol.">
        <title>Comparative genomics of 28 Salmonella enterica isolates: evidence for CRISPR-mediated adaptive sublineage evolution.</title>
        <authorList>
            <person name="Fricke W.F."/>
            <person name="Mammel M.K."/>
            <person name="McDermott P.F."/>
            <person name="Tartera C."/>
            <person name="White D.G."/>
            <person name="Leclerc J.E."/>
            <person name="Ravel J."/>
            <person name="Cebula T.A."/>
        </authorList>
    </citation>
    <scope>NUCLEOTIDE SEQUENCE [LARGE SCALE GENOMIC DNA]</scope>
    <source>
        <strain>SL254</strain>
    </source>
</reference>
<gene>
    <name evidence="1" type="primary">truD</name>
    <name type="ordered locus">SNSL254_A3134</name>
</gene>
<accession>B4T455</accession>
<dbReference type="EC" id="5.4.99.27" evidence="1"/>
<dbReference type="EMBL" id="CP001113">
    <property type="protein sequence ID" value="ACF62170.1"/>
    <property type="molecule type" value="Genomic_DNA"/>
</dbReference>
<dbReference type="RefSeq" id="WP_000134243.1">
    <property type="nucleotide sequence ID" value="NZ_CCMR01000001.1"/>
</dbReference>
<dbReference type="SMR" id="B4T455"/>
<dbReference type="KEGG" id="see:SNSL254_A3134"/>
<dbReference type="HOGENOM" id="CLU_005281_4_0_6"/>
<dbReference type="Proteomes" id="UP000008824">
    <property type="component" value="Chromosome"/>
</dbReference>
<dbReference type="GO" id="GO:0005829">
    <property type="term" value="C:cytosol"/>
    <property type="evidence" value="ECO:0007669"/>
    <property type="project" value="TreeGrafter"/>
</dbReference>
<dbReference type="GO" id="GO:0003723">
    <property type="term" value="F:RNA binding"/>
    <property type="evidence" value="ECO:0007669"/>
    <property type="project" value="InterPro"/>
</dbReference>
<dbReference type="GO" id="GO:0160150">
    <property type="term" value="F:tRNA pseudouridine(13) synthase activity"/>
    <property type="evidence" value="ECO:0007669"/>
    <property type="project" value="UniProtKB-EC"/>
</dbReference>
<dbReference type="GO" id="GO:0031119">
    <property type="term" value="P:tRNA pseudouridine synthesis"/>
    <property type="evidence" value="ECO:0007669"/>
    <property type="project" value="UniProtKB-UniRule"/>
</dbReference>
<dbReference type="CDD" id="cd02575">
    <property type="entry name" value="PseudoU_synth_EcTruD"/>
    <property type="match status" value="1"/>
</dbReference>
<dbReference type="FunFam" id="3.30.2340.10:FF:000001">
    <property type="entry name" value="tRNA pseudouridine synthase D"/>
    <property type="match status" value="1"/>
</dbReference>
<dbReference type="FunFam" id="3.30.2350.20:FF:000001">
    <property type="entry name" value="tRNA pseudouridine synthase D"/>
    <property type="match status" value="1"/>
</dbReference>
<dbReference type="Gene3D" id="3.30.2350.20">
    <property type="entry name" value="TruD, catalytic domain"/>
    <property type="match status" value="1"/>
</dbReference>
<dbReference type="Gene3D" id="3.30.2340.10">
    <property type="entry name" value="TruD, insertion domain"/>
    <property type="match status" value="1"/>
</dbReference>
<dbReference type="HAMAP" id="MF_01082">
    <property type="entry name" value="TruD"/>
    <property type="match status" value="1"/>
</dbReference>
<dbReference type="InterPro" id="IPR020103">
    <property type="entry name" value="PsdUridine_synth_cat_dom_sf"/>
</dbReference>
<dbReference type="InterPro" id="IPR001656">
    <property type="entry name" value="PsdUridine_synth_TruD"/>
</dbReference>
<dbReference type="InterPro" id="IPR020119">
    <property type="entry name" value="PsdUridine_synth_TruD_CS"/>
</dbReference>
<dbReference type="InterPro" id="IPR011760">
    <property type="entry name" value="PsdUridine_synth_TruD_insert"/>
</dbReference>
<dbReference type="InterPro" id="IPR042214">
    <property type="entry name" value="TruD_catalytic"/>
</dbReference>
<dbReference type="InterPro" id="IPR043165">
    <property type="entry name" value="TruD_insert_sf"/>
</dbReference>
<dbReference type="InterPro" id="IPR050170">
    <property type="entry name" value="TruD_pseudoU_synthase"/>
</dbReference>
<dbReference type="NCBIfam" id="NF002155">
    <property type="entry name" value="PRK00984.1-4"/>
    <property type="match status" value="1"/>
</dbReference>
<dbReference type="NCBIfam" id="TIGR00094">
    <property type="entry name" value="tRNA_TruD_broad"/>
    <property type="match status" value="1"/>
</dbReference>
<dbReference type="PANTHER" id="PTHR47811">
    <property type="entry name" value="TRNA PSEUDOURIDINE SYNTHASE D"/>
    <property type="match status" value="1"/>
</dbReference>
<dbReference type="PANTHER" id="PTHR47811:SF1">
    <property type="entry name" value="TRNA PSEUDOURIDINE SYNTHASE D"/>
    <property type="match status" value="1"/>
</dbReference>
<dbReference type="Pfam" id="PF01142">
    <property type="entry name" value="TruD"/>
    <property type="match status" value="2"/>
</dbReference>
<dbReference type="SUPFAM" id="SSF55120">
    <property type="entry name" value="Pseudouridine synthase"/>
    <property type="match status" value="1"/>
</dbReference>
<dbReference type="PROSITE" id="PS50984">
    <property type="entry name" value="TRUD"/>
    <property type="match status" value="1"/>
</dbReference>
<dbReference type="PROSITE" id="PS01268">
    <property type="entry name" value="UPF0024"/>
    <property type="match status" value="1"/>
</dbReference>
<evidence type="ECO:0000255" key="1">
    <source>
        <dbReference type="HAMAP-Rule" id="MF_01082"/>
    </source>
</evidence>
<proteinExistence type="inferred from homology"/>
<protein>
    <recommendedName>
        <fullName evidence="1">tRNA pseudouridine synthase D</fullName>
        <ecNumber evidence="1">5.4.99.27</ecNumber>
    </recommendedName>
    <alternativeName>
        <fullName evidence="1">tRNA pseudouridine(13) synthase</fullName>
    </alternativeName>
    <alternativeName>
        <fullName evidence="1">tRNA pseudouridylate synthase D</fullName>
    </alternativeName>
    <alternativeName>
        <fullName evidence="1">tRNA-uridine isomerase D</fullName>
    </alternativeName>
</protein>
<feature type="chain" id="PRO_1000136852" description="tRNA pseudouridine synthase D">
    <location>
        <begin position="1"/>
        <end position="349"/>
    </location>
</feature>
<feature type="domain" description="TRUD" evidence="1">
    <location>
        <begin position="155"/>
        <end position="303"/>
    </location>
</feature>
<feature type="active site" description="Nucleophile" evidence="1">
    <location>
        <position position="80"/>
    </location>
</feature>
<feature type="binding site" evidence="1">
    <location>
        <position position="27"/>
    </location>
    <ligand>
        <name>substrate</name>
    </ligand>
</feature>
<feature type="binding site" evidence="1">
    <location>
        <position position="129"/>
    </location>
    <ligand>
        <name>substrate</name>
    </ligand>
</feature>
<feature type="binding site" evidence="1">
    <location>
        <position position="329"/>
    </location>
    <ligand>
        <name>substrate</name>
    </ligand>
</feature>
<sequence length="349" mass="39314">MTEFDNLTWLHGKPQGSGLLKANPEDFVVVEDLGFTPDGEGEHILLRILKNGCNTRFVADALAKFLKIHAREVSFAGQKDKHAVTEQWLCARVPGKEMPDFSAFQLEGCKVLEYARHKRKLRLGALKGNAFTLVLREISDRRDVETRLQAIRDGGVPNYFGAQRFGIGGSNLQGALHWAQSNAPVRDRNKRSFWLSAARSALFNQIVHQRLKKPDFNQVVDGDALQLAGRGSWFVATSEELPELQRRVDEKELMITASLPGSGEWGTQRAALAFEQDAIAQETVLQSLLLREKVEASRRAMLLYPQQLSWNWWDDVTVELRFWLPAGSFATSVVRELINTMGDYAHIAE</sequence>
<name>TRUD_SALNS</name>
<comment type="function">
    <text evidence="1">Responsible for synthesis of pseudouridine from uracil-13 in transfer RNAs.</text>
</comment>
<comment type="catalytic activity">
    <reaction evidence="1">
        <text>uridine(13) in tRNA = pseudouridine(13) in tRNA</text>
        <dbReference type="Rhea" id="RHEA:42540"/>
        <dbReference type="Rhea" id="RHEA-COMP:10105"/>
        <dbReference type="Rhea" id="RHEA-COMP:10106"/>
        <dbReference type="ChEBI" id="CHEBI:65314"/>
        <dbReference type="ChEBI" id="CHEBI:65315"/>
        <dbReference type="EC" id="5.4.99.27"/>
    </reaction>
</comment>
<comment type="similarity">
    <text evidence="1">Belongs to the pseudouridine synthase TruD family.</text>
</comment>
<organism>
    <name type="scientific">Salmonella newport (strain SL254)</name>
    <dbReference type="NCBI Taxonomy" id="423368"/>
    <lineage>
        <taxon>Bacteria</taxon>
        <taxon>Pseudomonadati</taxon>
        <taxon>Pseudomonadota</taxon>
        <taxon>Gammaproteobacteria</taxon>
        <taxon>Enterobacterales</taxon>
        <taxon>Enterobacteriaceae</taxon>
        <taxon>Salmonella</taxon>
    </lineage>
</organism>
<keyword id="KW-0413">Isomerase</keyword>
<keyword id="KW-0819">tRNA processing</keyword>